<reference key="1">
    <citation type="submission" date="2006-06" db="EMBL/GenBank/DDBJ databases">
        <title>Complete sequence of chromosome of Mesorhizobium sp. BNC1.</title>
        <authorList>
            <consortium name="US DOE Joint Genome Institute"/>
            <person name="Copeland A."/>
            <person name="Lucas S."/>
            <person name="Lapidus A."/>
            <person name="Barry K."/>
            <person name="Detter J.C."/>
            <person name="Glavina del Rio T."/>
            <person name="Hammon N."/>
            <person name="Israni S."/>
            <person name="Dalin E."/>
            <person name="Tice H."/>
            <person name="Pitluck S."/>
            <person name="Chertkov O."/>
            <person name="Brettin T."/>
            <person name="Bruce D."/>
            <person name="Han C."/>
            <person name="Tapia R."/>
            <person name="Gilna P."/>
            <person name="Schmutz J."/>
            <person name="Larimer F."/>
            <person name="Land M."/>
            <person name="Hauser L."/>
            <person name="Kyrpides N."/>
            <person name="Mikhailova N."/>
            <person name="Richardson P."/>
        </authorList>
    </citation>
    <scope>NUCLEOTIDE SEQUENCE [LARGE SCALE GENOMIC DNA]</scope>
    <source>
        <strain>BNC1</strain>
    </source>
</reference>
<proteinExistence type="inferred from homology"/>
<sequence>MGQKVNPIGLRLGINRTWDSRWFANTNEYGQLLHEDLKIRTYIENELKQAAISKVVIERPHKKCRVTIHSARPGLIIGKKGADIEKLRRKITQMTNAETHLNIVEVRKPEIDARLIAQSIAQQLERRVAFRRAMKRAVQSAMRLGAEGIRINCTGRLGGAEIARIEWYREGRVPLHTLRADIDYGTAEAKTAYGVCGVKVWVFKGEILEHDPMASERRAVEGAGDGGGQRRRENA</sequence>
<evidence type="ECO:0000255" key="1">
    <source>
        <dbReference type="HAMAP-Rule" id="MF_01309"/>
    </source>
</evidence>
<evidence type="ECO:0000256" key="2">
    <source>
        <dbReference type="SAM" id="MobiDB-lite"/>
    </source>
</evidence>
<evidence type="ECO:0000305" key="3"/>
<feature type="chain" id="PRO_0000293823" description="Small ribosomal subunit protein uS3">
    <location>
        <begin position="1"/>
        <end position="235"/>
    </location>
</feature>
<feature type="domain" description="KH type-2" evidence="1">
    <location>
        <begin position="39"/>
        <end position="107"/>
    </location>
</feature>
<feature type="region of interest" description="Disordered" evidence="2">
    <location>
        <begin position="215"/>
        <end position="235"/>
    </location>
</feature>
<name>RS3_CHESB</name>
<keyword id="KW-0687">Ribonucleoprotein</keyword>
<keyword id="KW-0689">Ribosomal protein</keyword>
<keyword id="KW-0694">RNA-binding</keyword>
<keyword id="KW-0699">rRNA-binding</keyword>
<organism>
    <name type="scientific">Chelativorans sp. (strain BNC1)</name>
    <dbReference type="NCBI Taxonomy" id="266779"/>
    <lineage>
        <taxon>Bacteria</taxon>
        <taxon>Pseudomonadati</taxon>
        <taxon>Pseudomonadota</taxon>
        <taxon>Alphaproteobacteria</taxon>
        <taxon>Hyphomicrobiales</taxon>
        <taxon>Phyllobacteriaceae</taxon>
        <taxon>Chelativorans</taxon>
    </lineage>
</organism>
<accession>Q11HQ8</accession>
<protein>
    <recommendedName>
        <fullName evidence="1">Small ribosomal subunit protein uS3</fullName>
    </recommendedName>
    <alternativeName>
        <fullName evidence="3">30S ribosomal protein S3</fullName>
    </alternativeName>
</protein>
<gene>
    <name evidence="1" type="primary">rpsC</name>
    <name type="ordered locus">Meso_1672</name>
</gene>
<comment type="function">
    <text evidence="1">Binds the lower part of the 30S subunit head. Binds mRNA in the 70S ribosome, positioning it for translation.</text>
</comment>
<comment type="subunit">
    <text evidence="1">Part of the 30S ribosomal subunit. Forms a tight complex with proteins S10 and S14.</text>
</comment>
<comment type="similarity">
    <text evidence="1">Belongs to the universal ribosomal protein uS3 family.</text>
</comment>
<dbReference type="EMBL" id="CP000390">
    <property type="protein sequence ID" value="ABG63067.1"/>
    <property type="molecule type" value="Genomic_DNA"/>
</dbReference>
<dbReference type="SMR" id="Q11HQ8"/>
<dbReference type="STRING" id="266779.Meso_1672"/>
<dbReference type="KEGG" id="mes:Meso_1672"/>
<dbReference type="eggNOG" id="COG0092">
    <property type="taxonomic scope" value="Bacteria"/>
</dbReference>
<dbReference type="HOGENOM" id="CLU_058591_0_2_5"/>
<dbReference type="OrthoDB" id="9806396at2"/>
<dbReference type="GO" id="GO:0022627">
    <property type="term" value="C:cytosolic small ribosomal subunit"/>
    <property type="evidence" value="ECO:0007669"/>
    <property type="project" value="TreeGrafter"/>
</dbReference>
<dbReference type="GO" id="GO:0003729">
    <property type="term" value="F:mRNA binding"/>
    <property type="evidence" value="ECO:0007669"/>
    <property type="project" value="UniProtKB-UniRule"/>
</dbReference>
<dbReference type="GO" id="GO:0019843">
    <property type="term" value="F:rRNA binding"/>
    <property type="evidence" value="ECO:0007669"/>
    <property type="project" value="UniProtKB-UniRule"/>
</dbReference>
<dbReference type="GO" id="GO:0003735">
    <property type="term" value="F:structural constituent of ribosome"/>
    <property type="evidence" value="ECO:0007669"/>
    <property type="project" value="InterPro"/>
</dbReference>
<dbReference type="GO" id="GO:0006412">
    <property type="term" value="P:translation"/>
    <property type="evidence" value="ECO:0007669"/>
    <property type="project" value="UniProtKB-UniRule"/>
</dbReference>
<dbReference type="CDD" id="cd02412">
    <property type="entry name" value="KH-II_30S_S3"/>
    <property type="match status" value="1"/>
</dbReference>
<dbReference type="FunFam" id="3.30.1140.32:FF:000002">
    <property type="entry name" value="30S ribosomal protein S3"/>
    <property type="match status" value="1"/>
</dbReference>
<dbReference type="FunFam" id="3.30.300.20:FF:000001">
    <property type="entry name" value="30S ribosomal protein S3"/>
    <property type="match status" value="1"/>
</dbReference>
<dbReference type="Gene3D" id="3.30.300.20">
    <property type="match status" value="1"/>
</dbReference>
<dbReference type="Gene3D" id="3.30.1140.32">
    <property type="entry name" value="Ribosomal protein S3, C-terminal domain"/>
    <property type="match status" value="1"/>
</dbReference>
<dbReference type="HAMAP" id="MF_01309_B">
    <property type="entry name" value="Ribosomal_uS3_B"/>
    <property type="match status" value="1"/>
</dbReference>
<dbReference type="InterPro" id="IPR004087">
    <property type="entry name" value="KH_dom"/>
</dbReference>
<dbReference type="InterPro" id="IPR015946">
    <property type="entry name" value="KH_dom-like_a/b"/>
</dbReference>
<dbReference type="InterPro" id="IPR004044">
    <property type="entry name" value="KH_dom_type_2"/>
</dbReference>
<dbReference type="InterPro" id="IPR009019">
    <property type="entry name" value="KH_sf_prok-type"/>
</dbReference>
<dbReference type="InterPro" id="IPR036419">
    <property type="entry name" value="Ribosomal_S3_C_sf"/>
</dbReference>
<dbReference type="InterPro" id="IPR005704">
    <property type="entry name" value="Ribosomal_uS3_bac-typ"/>
</dbReference>
<dbReference type="InterPro" id="IPR001351">
    <property type="entry name" value="Ribosomal_uS3_C"/>
</dbReference>
<dbReference type="InterPro" id="IPR018280">
    <property type="entry name" value="Ribosomal_uS3_CS"/>
</dbReference>
<dbReference type="NCBIfam" id="TIGR01009">
    <property type="entry name" value="rpsC_bact"/>
    <property type="match status" value="1"/>
</dbReference>
<dbReference type="PANTHER" id="PTHR11760">
    <property type="entry name" value="30S/40S RIBOSOMAL PROTEIN S3"/>
    <property type="match status" value="1"/>
</dbReference>
<dbReference type="PANTHER" id="PTHR11760:SF19">
    <property type="entry name" value="SMALL RIBOSOMAL SUBUNIT PROTEIN US3C"/>
    <property type="match status" value="1"/>
</dbReference>
<dbReference type="Pfam" id="PF07650">
    <property type="entry name" value="KH_2"/>
    <property type="match status" value="1"/>
</dbReference>
<dbReference type="Pfam" id="PF00189">
    <property type="entry name" value="Ribosomal_S3_C"/>
    <property type="match status" value="1"/>
</dbReference>
<dbReference type="SMART" id="SM00322">
    <property type="entry name" value="KH"/>
    <property type="match status" value="1"/>
</dbReference>
<dbReference type="SUPFAM" id="SSF54814">
    <property type="entry name" value="Prokaryotic type KH domain (KH-domain type II)"/>
    <property type="match status" value="1"/>
</dbReference>
<dbReference type="SUPFAM" id="SSF54821">
    <property type="entry name" value="Ribosomal protein S3 C-terminal domain"/>
    <property type="match status" value="1"/>
</dbReference>
<dbReference type="PROSITE" id="PS50823">
    <property type="entry name" value="KH_TYPE_2"/>
    <property type="match status" value="1"/>
</dbReference>
<dbReference type="PROSITE" id="PS00548">
    <property type="entry name" value="RIBOSOMAL_S3"/>
    <property type="match status" value="1"/>
</dbReference>